<organism>
    <name type="scientific">Francisella tularensis subsp. tularensis (strain WY96-3418)</name>
    <dbReference type="NCBI Taxonomy" id="418136"/>
    <lineage>
        <taxon>Bacteria</taxon>
        <taxon>Pseudomonadati</taxon>
        <taxon>Pseudomonadota</taxon>
        <taxon>Gammaproteobacteria</taxon>
        <taxon>Thiotrichales</taxon>
        <taxon>Francisellaceae</taxon>
        <taxon>Francisella</taxon>
    </lineage>
</organism>
<comment type="function">
    <text evidence="1">Catalyzes the specific phosphorylation of the 3-hydroxyl group of shikimic acid using ATP as a cosubstrate.</text>
</comment>
<comment type="catalytic activity">
    <reaction evidence="1">
        <text>shikimate + ATP = 3-phosphoshikimate + ADP + H(+)</text>
        <dbReference type="Rhea" id="RHEA:13121"/>
        <dbReference type="ChEBI" id="CHEBI:15378"/>
        <dbReference type="ChEBI" id="CHEBI:30616"/>
        <dbReference type="ChEBI" id="CHEBI:36208"/>
        <dbReference type="ChEBI" id="CHEBI:145989"/>
        <dbReference type="ChEBI" id="CHEBI:456216"/>
        <dbReference type="EC" id="2.7.1.71"/>
    </reaction>
</comment>
<comment type="cofactor">
    <cofactor evidence="1">
        <name>Mg(2+)</name>
        <dbReference type="ChEBI" id="CHEBI:18420"/>
    </cofactor>
    <text evidence="1">Binds 1 Mg(2+) ion per subunit.</text>
</comment>
<comment type="pathway">
    <text evidence="1">Metabolic intermediate biosynthesis; chorismate biosynthesis; chorismate from D-erythrose 4-phosphate and phosphoenolpyruvate: step 5/7.</text>
</comment>
<comment type="subunit">
    <text evidence="1">Monomer.</text>
</comment>
<comment type="subcellular location">
    <subcellularLocation>
        <location evidence="1">Cytoplasm</location>
    </subcellularLocation>
</comment>
<comment type="similarity">
    <text evidence="1">Belongs to the shikimate kinase family.</text>
</comment>
<gene>
    <name evidence="1" type="primary">aroK</name>
    <name type="ordered locus">FTW_1194</name>
</gene>
<accession>A4IYJ0</accession>
<sequence>MIRTKNIFLIGPVGAGKSTIGKQLAKQLKLEFIDSDDVIEKKCGVDINWIFDLEGEEGFRKREREVIAEILAEKQNIVLATGGGAILDPETRSLLSSRGKVVYLEATIEQQLERTSKDTKRPLLRVDDKRPVLEQLMAEREPLYRSIADVVVETNGATVKNIVNKISTFLVEETIL</sequence>
<feature type="chain" id="PRO_1000022973" description="Shikimate kinase">
    <location>
        <begin position="1"/>
        <end position="176"/>
    </location>
</feature>
<feature type="binding site" evidence="1">
    <location>
        <begin position="14"/>
        <end position="19"/>
    </location>
    <ligand>
        <name>ATP</name>
        <dbReference type="ChEBI" id="CHEBI:30616"/>
    </ligand>
</feature>
<feature type="binding site" evidence="1">
    <location>
        <position position="18"/>
    </location>
    <ligand>
        <name>Mg(2+)</name>
        <dbReference type="ChEBI" id="CHEBI:18420"/>
    </ligand>
</feature>
<feature type="binding site" evidence="1">
    <location>
        <position position="36"/>
    </location>
    <ligand>
        <name>substrate</name>
    </ligand>
</feature>
<feature type="binding site" evidence="1">
    <location>
        <position position="60"/>
    </location>
    <ligand>
        <name>substrate</name>
    </ligand>
</feature>
<feature type="binding site" evidence="1">
    <location>
        <position position="83"/>
    </location>
    <ligand>
        <name>substrate</name>
    </ligand>
</feature>
<feature type="binding site" evidence="1">
    <location>
        <position position="121"/>
    </location>
    <ligand>
        <name>ATP</name>
        <dbReference type="ChEBI" id="CHEBI:30616"/>
    </ligand>
</feature>
<feature type="binding site" evidence="1">
    <location>
        <position position="140"/>
    </location>
    <ligand>
        <name>substrate</name>
    </ligand>
</feature>
<keyword id="KW-0028">Amino-acid biosynthesis</keyword>
<keyword id="KW-0057">Aromatic amino acid biosynthesis</keyword>
<keyword id="KW-0067">ATP-binding</keyword>
<keyword id="KW-0963">Cytoplasm</keyword>
<keyword id="KW-0418">Kinase</keyword>
<keyword id="KW-0460">Magnesium</keyword>
<keyword id="KW-0479">Metal-binding</keyword>
<keyword id="KW-0547">Nucleotide-binding</keyword>
<keyword id="KW-0808">Transferase</keyword>
<proteinExistence type="inferred from homology"/>
<protein>
    <recommendedName>
        <fullName evidence="1">Shikimate kinase</fullName>
        <shortName evidence="1">SK</shortName>
        <ecNumber evidence="1">2.7.1.71</ecNumber>
    </recommendedName>
</protein>
<reference key="1">
    <citation type="journal article" date="2007" name="PLoS ONE">
        <title>Complete genomic characterization of a pathogenic A.II strain of Francisella tularensis subspecies tularensis.</title>
        <authorList>
            <person name="Beckstrom-Sternberg S.M."/>
            <person name="Auerbach R.K."/>
            <person name="Godbole S."/>
            <person name="Pearson J.V."/>
            <person name="Beckstrom-Sternberg J.S."/>
            <person name="Deng Z."/>
            <person name="Munk C."/>
            <person name="Kubota K."/>
            <person name="Zhou Y."/>
            <person name="Bruce D."/>
            <person name="Noronha J."/>
            <person name="Scheuermann R.H."/>
            <person name="Wang A."/>
            <person name="Wei X."/>
            <person name="Wang J."/>
            <person name="Hao J."/>
            <person name="Wagner D.M."/>
            <person name="Brettin T.S."/>
            <person name="Brown N."/>
            <person name="Gilna P."/>
            <person name="Keim P.S."/>
        </authorList>
    </citation>
    <scope>NUCLEOTIDE SEQUENCE [LARGE SCALE GENOMIC DNA]</scope>
    <source>
        <strain>WY96-3418</strain>
    </source>
</reference>
<dbReference type="EC" id="2.7.1.71" evidence="1"/>
<dbReference type="EMBL" id="CP000608">
    <property type="protein sequence ID" value="ABO46991.1"/>
    <property type="molecule type" value="Genomic_DNA"/>
</dbReference>
<dbReference type="RefSeq" id="WP_003018629.1">
    <property type="nucleotide sequence ID" value="NC_009257.1"/>
</dbReference>
<dbReference type="SMR" id="A4IYJ0"/>
<dbReference type="GeneID" id="75265130"/>
<dbReference type="KEGG" id="ftw:FTW_1194"/>
<dbReference type="HOGENOM" id="CLU_057607_2_2_6"/>
<dbReference type="UniPathway" id="UPA00053">
    <property type="reaction ID" value="UER00088"/>
</dbReference>
<dbReference type="GO" id="GO:0005829">
    <property type="term" value="C:cytosol"/>
    <property type="evidence" value="ECO:0007669"/>
    <property type="project" value="TreeGrafter"/>
</dbReference>
<dbReference type="GO" id="GO:0005524">
    <property type="term" value="F:ATP binding"/>
    <property type="evidence" value="ECO:0007669"/>
    <property type="project" value="UniProtKB-UniRule"/>
</dbReference>
<dbReference type="GO" id="GO:0016887">
    <property type="term" value="F:ATP hydrolysis activity"/>
    <property type="evidence" value="ECO:0007669"/>
    <property type="project" value="InterPro"/>
</dbReference>
<dbReference type="GO" id="GO:0000287">
    <property type="term" value="F:magnesium ion binding"/>
    <property type="evidence" value="ECO:0007669"/>
    <property type="project" value="UniProtKB-UniRule"/>
</dbReference>
<dbReference type="GO" id="GO:0004765">
    <property type="term" value="F:shikimate kinase activity"/>
    <property type="evidence" value="ECO:0007669"/>
    <property type="project" value="UniProtKB-UniRule"/>
</dbReference>
<dbReference type="GO" id="GO:0008652">
    <property type="term" value="P:amino acid biosynthetic process"/>
    <property type="evidence" value="ECO:0007669"/>
    <property type="project" value="UniProtKB-KW"/>
</dbReference>
<dbReference type="GO" id="GO:0009073">
    <property type="term" value="P:aromatic amino acid family biosynthetic process"/>
    <property type="evidence" value="ECO:0007669"/>
    <property type="project" value="UniProtKB-KW"/>
</dbReference>
<dbReference type="GO" id="GO:0009423">
    <property type="term" value="P:chorismate biosynthetic process"/>
    <property type="evidence" value="ECO:0007669"/>
    <property type="project" value="UniProtKB-UniRule"/>
</dbReference>
<dbReference type="CDD" id="cd00464">
    <property type="entry name" value="SK"/>
    <property type="match status" value="1"/>
</dbReference>
<dbReference type="Gene3D" id="3.40.50.300">
    <property type="entry name" value="P-loop containing nucleotide triphosphate hydrolases"/>
    <property type="match status" value="1"/>
</dbReference>
<dbReference type="HAMAP" id="MF_00109">
    <property type="entry name" value="Shikimate_kinase"/>
    <property type="match status" value="1"/>
</dbReference>
<dbReference type="InterPro" id="IPR003593">
    <property type="entry name" value="AAA+_ATPase"/>
</dbReference>
<dbReference type="InterPro" id="IPR027417">
    <property type="entry name" value="P-loop_NTPase"/>
</dbReference>
<dbReference type="InterPro" id="IPR031322">
    <property type="entry name" value="Shikimate/glucono_kinase"/>
</dbReference>
<dbReference type="InterPro" id="IPR000623">
    <property type="entry name" value="Shikimate_kinase/TSH1"/>
</dbReference>
<dbReference type="InterPro" id="IPR023000">
    <property type="entry name" value="Shikimate_kinase_CS"/>
</dbReference>
<dbReference type="NCBIfam" id="NF003456">
    <property type="entry name" value="PRK05057.1"/>
    <property type="match status" value="1"/>
</dbReference>
<dbReference type="PANTHER" id="PTHR21087">
    <property type="entry name" value="SHIKIMATE KINASE"/>
    <property type="match status" value="1"/>
</dbReference>
<dbReference type="PANTHER" id="PTHR21087:SF16">
    <property type="entry name" value="SHIKIMATE KINASE 1, CHLOROPLASTIC"/>
    <property type="match status" value="1"/>
</dbReference>
<dbReference type="Pfam" id="PF01202">
    <property type="entry name" value="SKI"/>
    <property type="match status" value="1"/>
</dbReference>
<dbReference type="PRINTS" id="PR01100">
    <property type="entry name" value="SHIKIMTKNASE"/>
</dbReference>
<dbReference type="SMART" id="SM00382">
    <property type="entry name" value="AAA"/>
    <property type="match status" value="1"/>
</dbReference>
<dbReference type="SUPFAM" id="SSF52540">
    <property type="entry name" value="P-loop containing nucleoside triphosphate hydrolases"/>
    <property type="match status" value="1"/>
</dbReference>
<dbReference type="PROSITE" id="PS01128">
    <property type="entry name" value="SHIKIMATE_KINASE"/>
    <property type="match status" value="1"/>
</dbReference>
<evidence type="ECO:0000255" key="1">
    <source>
        <dbReference type="HAMAP-Rule" id="MF_00109"/>
    </source>
</evidence>
<name>AROK_FRATW</name>